<feature type="chain" id="PRO_0000268760" description="Photosystem I reaction center subunit IX">
    <location>
        <begin position="1"/>
        <end position="41"/>
    </location>
</feature>
<feature type="transmembrane region" description="Helical" evidence="1">
    <location>
        <begin position="7"/>
        <end position="27"/>
    </location>
</feature>
<keyword id="KW-0472">Membrane</keyword>
<keyword id="KW-0602">Photosynthesis</keyword>
<keyword id="KW-0603">Photosystem I</keyword>
<keyword id="KW-0793">Thylakoid</keyword>
<keyword id="KW-0812">Transmembrane</keyword>
<keyword id="KW-1133">Transmembrane helix</keyword>
<organism>
    <name type="scientific">Synechococcus sp. (strain ATCC 27144 / PCC 6301 / SAUG 1402/1)</name>
    <name type="common">Anacystis nidulans</name>
    <dbReference type="NCBI Taxonomy" id="269084"/>
    <lineage>
        <taxon>Bacteria</taxon>
        <taxon>Bacillati</taxon>
        <taxon>Cyanobacteriota</taxon>
        <taxon>Cyanophyceae</taxon>
        <taxon>Synechococcales</taxon>
        <taxon>Synechococcaceae</taxon>
        <taxon>Synechococcus</taxon>
    </lineage>
</organism>
<sequence length="41" mass="4710">MDGLKRYLSSAPILATIWFAITAGILIEFNRFFPDLLFHPL</sequence>
<name>PSAJ_SYNP6</name>
<dbReference type="EMBL" id="AP008231">
    <property type="protein sequence ID" value="BAD78491.1"/>
    <property type="status" value="ALT_INIT"/>
    <property type="molecule type" value="Genomic_DNA"/>
</dbReference>
<dbReference type="SMR" id="Q5N5C7"/>
<dbReference type="KEGG" id="syc:syc0301_d"/>
<dbReference type="eggNOG" id="ENOG5033A5A">
    <property type="taxonomic scope" value="Bacteria"/>
</dbReference>
<dbReference type="Proteomes" id="UP000001175">
    <property type="component" value="Chromosome"/>
</dbReference>
<dbReference type="GO" id="GO:0009522">
    <property type="term" value="C:photosystem I"/>
    <property type="evidence" value="ECO:0007669"/>
    <property type="project" value="UniProtKB-KW"/>
</dbReference>
<dbReference type="GO" id="GO:0031676">
    <property type="term" value="C:plasma membrane-derived thylakoid membrane"/>
    <property type="evidence" value="ECO:0007669"/>
    <property type="project" value="UniProtKB-SubCell"/>
</dbReference>
<dbReference type="GO" id="GO:0015979">
    <property type="term" value="P:photosynthesis"/>
    <property type="evidence" value="ECO:0007669"/>
    <property type="project" value="UniProtKB-UniRule"/>
</dbReference>
<dbReference type="Gene3D" id="1.20.5.510">
    <property type="entry name" value="Single helix bin"/>
    <property type="match status" value="1"/>
</dbReference>
<dbReference type="HAMAP" id="MF_00522">
    <property type="entry name" value="PSI_PsaJ"/>
    <property type="match status" value="1"/>
</dbReference>
<dbReference type="InterPro" id="IPR002615">
    <property type="entry name" value="PSI_PsaJ"/>
</dbReference>
<dbReference type="InterPro" id="IPR036062">
    <property type="entry name" value="PSI_PsaJ_sf"/>
</dbReference>
<dbReference type="NCBIfam" id="NF002743">
    <property type="entry name" value="PRK02733.1"/>
    <property type="match status" value="1"/>
</dbReference>
<dbReference type="PANTHER" id="PTHR36082">
    <property type="match status" value="1"/>
</dbReference>
<dbReference type="PANTHER" id="PTHR36082:SF2">
    <property type="entry name" value="PHOTOSYSTEM I REACTION CENTER SUBUNIT IX"/>
    <property type="match status" value="1"/>
</dbReference>
<dbReference type="Pfam" id="PF01701">
    <property type="entry name" value="PSI_PsaJ"/>
    <property type="match status" value="1"/>
</dbReference>
<dbReference type="SUPFAM" id="SSF81544">
    <property type="entry name" value="Subunit IX of photosystem I reaction centre, PsaJ"/>
    <property type="match status" value="1"/>
</dbReference>
<proteinExistence type="inferred from homology"/>
<reference key="1">
    <citation type="journal article" date="2007" name="Photosyn. Res.">
        <title>Complete nucleotide sequence of the freshwater unicellular cyanobacterium Synechococcus elongatus PCC 6301 chromosome: gene content and organization.</title>
        <authorList>
            <person name="Sugita C."/>
            <person name="Ogata K."/>
            <person name="Shikata M."/>
            <person name="Jikuya H."/>
            <person name="Takano J."/>
            <person name="Furumichi M."/>
            <person name="Kanehisa M."/>
            <person name="Omata T."/>
            <person name="Sugiura M."/>
            <person name="Sugita M."/>
        </authorList>
    </citation>
    <scope>NUCLEOTIDE SEQUENCE [LARGE SCALE GENOMIC DNA]</scope>
    <source>
        <strain>ATCC 27144 / PCC 6301 / SAUG 1402/1</strain>
    </source>
</reference>
<gene>
    <name evidence="1" type="primary">psaJ</name>
    <name type="ordered locus">syc0301_d</name>
</gene>
<protein>
    <recommendedName>
        <fullName evidence="1">Photosystem I reaction center subunit IX</fullName>
    </recommendedName>
</protein>
<comment type="function">
    <text evidence="1">May help in the organization of the PsaE and PsaF subunits.</text>
</comment>
<comment type="subcellular location">
    <subcellularLocation>
        <location evidence="1">Cellular thylakoid membrane</location>
        <topology evidence="1">Single-pass membrane protein</topology>
    </subcellularLocation>
</comment>
<comment type="similarity">
    <text evidence="1">Belongs to the PsaJ family.</text>
</comment>
<comment type="sequence caution" evidence="2">
    <conflict type="erroneous initiation">
        <sequence resource="EMBL-CDS" id="BAD78491"/>
    </conflict>
</comment>
<accession>Q5N5C7</accession>
<evidence type="ECO:0000255" key="1">
    <source>
        <dbReference type="HAMAP-Rule" id="MF_00522"/>
    </source>
</evidence>
<evidence type="ECO:0000305" key="2"/>